<sequence>MKRIGLTGNIGCGKSTVAQMFRELGAYVLDADKLIHSFYRKGHPVYEEVVKTFGKGILDEEGNIDRKKLADIVFKDEEKLRKLEEITHRALYKEIEKITKNLSEDTLFILEASLLVEKGTYKNYDKLIVVYAPYEVCKERAIKRGMSEEDFERRWKKQMPIEEKVKYADYVIDNSGSIEETYKQVKKVYEELTRDP</sequence>
<gene>
    <name evidence="1" type="primary">coaE</name>
    <name type="ordered locus">aq_1985</name>
</gene>
<comment type="function">
    <text evidence="1">Catalyzes the phosphorylation of the 3'-hydroxyl group of dephosphocoenzyme A to form coenzyme A.</text>
</comment>
<comment type="catalytic activity">
    <reaction evidence="1">
        <text>3'-dephospho-CoA + ATP = ADP + CoA + H(+)</text>
        <dbReference type="Rhea" id="RHEA:18245"/>
        <dbReference type="ChEBI" id="CHEBI:15378"/>
        <dbReference type="ChEBI" id="CHEBI:30616"/>
        <dbReference type="ChEBI" id="CHEBI:57287"/>
        <dbReference type="ChEBI" id="CHEBI:57328"/>
        <dbReference type="ChEBI" id="CHEBI:456216"/>
        <dbReference type="EC" id="2.7.1.24"/>
    </reaction>
</comment>
<comment type="pathway">
    <text evidence="1">Cofactor biosynthesis; coenzyme A biosynthesis; CoA from (R)-pantothenate: step 5/5.</text>
</comment>
<comment type="subcellular location">
    <subcellularLocation>
        <location evidence="1">Cytoplasm</location>
    </subcellularLocation>
</comment>
<comment type="similarity">
    <text evidence="1 2">Belongs to the CoaE family.</text>
</comment>
<accession>O67792</accession>
<name>COAE_AQUAE</name>
<protein>
    <recommendedName>
        <fullName evidence="1">Dephospho-CoA kinase</fullName>
        <ecNumber evidence="1">2.7.1.24</ecNumber>
    </recommendedName>
    <alternativeName>
        <fullName evidence="1">Dephosphocoenzyme A kinase</fullName>
    </alternativeName>
</protein>
<reference key="1">
    <citation type="journal article" date="1998" name="Nature">
        <title>The complete genome of the hyperthermophilic bacterium Aquifex aeolicus.</title>
        <authorList>
            <person name="Deckert G."/>
            <person name="Warren P.V."/>
            <person name="Gaasterland T."/>
            <person name="Young W.G."/>
            <person name="Lenox A.L."/>
            <person name="Graham D.E."/>
            <person name="Overbeek R."/>
            <person name="Snead M.A."/>
            <person name="Keller M."/>
            <person name="Aujay M."/>
            <person name="Huber R."/>
            <person name="Feldman R.A."/>
            <person name="Short J.M."/>
            <person name="Olsen G.J."/>
            <person name="Swanson R.V."/>
        </authorList>
    </citation>
    <scope>NUCLEOTIDE SEQUENCE [LARGE SCALE GENOMIC DNA]</scope>
    <source>
        <strain>VF5</strain>
    </source>
</reference>
<keyword id="KW-0002">3D-structure</keyword>
<keyword id="KW-0067">ATP-binding</keyword>
<keyword id="KW-0173">Coenzyme A biosynthesis</keyword>
<keyword id="KW-0963">Cytoplasm</keyword>
<keyword id="KW-0418">Kinase</keyword>
<keyword id="KW-0547">Nucleotide-binding</keyword>
<keyword id="KW-1185">Reference proteome</keyword>
<keyword id="KW-0808">Transferase</keyword>
<proteinExistence type="evidence at protein level"/>
<dbReference type="EC" id="2.7.1.24" evidence="1"/>
<dbReference type="EMBL" id="AE000657">
    <property type="protein sequence ID" value="AAC07761.1"/>
    <property type="molecule type" value="Genomic_DNA"/>
</dbReference>
<dbReference type="PIR" id="D70470">
    <property type="entry name" value="D70470"/>
</dbReference>
<dbReference type="RefSeq" id="NP_214361.1">
    <property type="nucleotide sequence ID" value="NC_000918.1"/>
</dbReference>
<dbReference type="RefSeq" id="WP_010881297.1">
    <property type="nucleotide sequence ID" value="NC_000918.1"/>
</dbReference>
<dbReference type="PDB" id="2IF2">
    <property type="method" value="X-ray"/>
    <property type="resolution" value="3.00 A"/>
    <property type="chains" value="A/B/C=1-196"/>
</dbReference>
<dbReference type="PDBsum" id="2IF2"/>
<dbReference type="SMR" id="O67792"/>
<dbReference type="FunCoup" id="O67792">
    <property type="interactions" value="341"/>
</dbReference>
<dbReference type="STRING" id="224324.aq_1985"/>
<dbReference type="EnsemblBacteria" id="AAC07761">
    <property type="protein sequence ID" value="AAC07761"/>
    <property type="gene ID" value="aq_1985"/>
</dbReference>
<dbReference type="KEGG" id="aae:aq_1985"/>
<dbReference type="PATRIC" id="fig|224324.8.peg.1534"/>
<dbReference type="eggNOG" id="COG0237">
    <property type="taxonomic scope" value="Bacteria"/>
</dbReference>
<dbReference type="HOGENOM" id="CLU_057180_2_1_0"/>
<dbReference type="InParanoid" id="O67792"/>
<dbReference type="OrthoDB" id="9812943at2"/>
<dbReference type="UniPathway" id="UPA00241">
    <property type="reaction ID" value="UER00356"/>
</dbReference>
<dbReference type="EvolutionaryTrace" id="O67792"/>
<dbReference type="Proteomes" id="UP000000798">
    <property type="component" value="Chromosome"/>
</dbReference>
<dbReference type="GO" id="GO:0005737">
    <property type="term" value="C:cytoplasm"/>
    <property type="evidence" value="ECO:0007669"/>
    <property type="project" value="UniProtKB-SubCell"/>
</dbReference>
<dbReference type="GO" id="GO:0005524">
    <property type="term" value="F:ATP binding"/>
    <property type="evidence" value="ECO:0007669"/>
    <property type="project" value="UniProtKB-UniRule"/>
</dbReference>
<dbReference type="GO" id="GO:0004140">
    <property type="term" value="F:dephospho-CoA kinase activity"/>
    <property type="evidence" value="ECO:0000318"/>
    <property type="project" value="GO_Central"/>
</dbReference>
<dbReference type="GO" id="GO:0015937">
    <property type="term" value="P:coenzyme A biosynthetic process"/>
    <property type="evidence" value="ECO:0000318"/>
    <property type="project" value="GO_Central"/>
</dbReference>
<dbReference type="CDD" id="cd02022">
    <property type="entry name" value="DPCK"/>
    <property type="match status" value="1"/>
</dbReference>
<dbReference type="FunFam" id="3.40.50.300:FF:000991">
    <property type="entry name" value="Dephospho-CoA kinase"/>
    <property type="match status" value="1"/>
</dbReference>
<dbReference type="Gene3D" id="3.40.50.300">
    <property type="entry name" value="P-loop containing nucleotide triphosphate hydrolases"/>
    <property type="match status" value="1"/>
</dbReference>
<dbReference type="HAMAP" id="MF_00376">
    <property type="entry name" value="Dephospho_CoA_kinase"/>
    <property type="match status" value="1"/>
</dbReference>
<dbReference type="InterPro" id="IPR001977">
    <property type="entry name" value="Depp_CoAkinase"/>
</dbReference>
<dbReference type="InterPro" id="IPR027417">
    <property type="entry name" value="P-loop_NTPase"/>
</dbReference>
<dbReference type="NCBIfam" id="TIGR00152">
    <property type="entry name" value="dephospho-CoA kinase"/>
    <property type="match status" value="1"/>
</dbReference>
<dbReference type="PANTHER" id="PTHR10695:SF46">
    <property type="entry name" value="BIFUNCTIONAL COENZYME A SYNTHASE-RELATED"/>
    <property type="match status" value="1"/>
</dbReference>
<dbReference type="PANTHER" id="PTHR10695">
    <property type="entry name" value="DEPHOSPHO-COA KINASE-RELATED"/>
    <property type="match status" value="1"/>
</dbReference>
<dbReference type="Pfam" id="PF01121">
    <property type="entry name" value="CoaE"/>
    <property type="match status" value="1"/>
</dbReference>
<dbReference type="SUPFAM" id="SSF52540">
    <property type="entry name" value="P-loop containing nucleoside triphosphate hydrolases"/>
    <property type="match status" value="1"/>
</dbReference>
<dbReference type="PROSITE" id="PS51219">
    <property type="entry name" value="DPCK"/>
    <property type="match status" value="1"/>
</dbReference>
<evidence type="ECO:0000255" key="1">
    <source>
        <dbReference type="HAMAP-Rule" id="MF_00376"/>
    </source>
</evidence>
<evidence type="ECO:0000305" key="2"/>
<evidence type="ECO:0007829" key="3">
    <source>
        <dbReference type="PDB" id="2IF2"/>
    </source>
</evidence>
<organism>
    <name type="scientific">Aquifex aeolicus (strain VF5)</name>
    <dbReference type="NCBI Taxonomy" id="224324"/>
    <lineage>
        <taxon>Bacteria</taxon>
        <taxon>Pseudomonadati</taxon>
        <taxon>Aquificota</taxon>
        <taxon>Aquificia</taxon>
        <taxon>Aquificales</taxon>
        <taxon>Aquificaceae</taxon>
        <taxon>Aquifex</taxon>
    </lineage>
</organism>
<feature type="chain" id="PRO_0000172900" description="Dephospho-CoA kinase">
    <location>
        <begin position="1"/>
        <end position="196"/>
    </location>
</feature>
<feature type="domain" description="DPCK" evidence="1">
    <location>
        <begin position="3"/>
        <end position="196"/>
    </location>
</feature>
<feature type="binding site" evidence="1">
    <location>
        <begin position="11"/>
        <end position="16"/>
    </location>
    <ligand>
        <name>ATP</name>
        <dbReference type="ChEBI" id="CHEBI:30616"/>
    </ligand>
</feature>
<feature type="strand" evidence="3">
    <location>
        <begin position="3"/>
        <end position="8"/>
    </location>
</feature>
<feature type="helix" evidence="3">
    <location>
        <begin position="14"/>
        <end position="23"/>
    </location>
</feature>
<feature type="strand" evidence="3">
    <location>
        <begin position="27"/>
        <end position="30"/>
    </location>
</feature>
<feature type="helix" evidence="3">
    <location>
        <begin position="31"/>
        <end position="36"/>
    </location>
</feature>
<feature type="helix" evidence="3">
    <location>
        <begin position="37"/>
        <end position="39"/>
    </location>
</feature>
<feature type="strand" evidence="3">
    <location>
        <begin position="40"/>
        <end position="43"/>
    </location>
</feature>
<feature type="helix" evidence="3">
    <location>
        <begin position="44"/>
        <end position="53"/>
    </location>
</feature>
<feature type="turn" evidence="3">
    <location>
        <begin position="55"/>
        <end position="58"/>
    </location>
</feature>
<feature type="helix" evidence="3">
    <location>
        <begin position="66"/>
        <end position="71"/>
    </location>
</feature>
<feature type="helix" evidence="3">
    <location>
        <begin position="77"/>
        <end position="91"/>
    </location>
</feature>
<feature type="turn" evidence="3">
    <location>
        <begin position="92"/>
        <end position="94"/>
    </location>
</feature>
<feature type="helix" evidence="3">
    <location>
        <begin position="95"/>
        <end position="101"/>
    </location>
</feature>
<feature type="strand" evidence="3">
    <location>
        <begin position="108"/>
        <end position="111"/>
    </location>
</feature>
<feature type="turn" evidence="3">
    <location>
        <begin position="116"/>
        <end position="119"/>
    </location>
</feature>
<feature type="helix" evidence="3">
    <location>
        <begin position="121"/>
        <end position="123"/>
    </location>
</feature>
<feature type="strand" evidence="3">
    <location>
        <begin position="124"/>
        <end position="130"/>
    </location>
</feature>
<feature type="helix" evidence="3">
    <location>
        <begin position="134"/>
        <end position="143"/>
    </location>
</feature>
<feature type="helix" evidence="3">
    <location>
        <begin position="148"/>
        <end position="155"/>
    </location>
</feature>
<feature type="helix" evidence="3">
    <location>
        <begin position="161"/>
        <end position="164"/>
    </location>
</feature>
<feature type="helix" evidence="3">
    <location>
        <begin position="165"/>
        <end position="167"/>
    </location>
</feature>
<feature type="strand" evidence="3">
    <location>
        <begin position="169"/>
        <end position="171"/>
    </location>
</feature>
<feature type="helix" evidence="3">
    <location>
        <begin position="178"/>
        <end position="190"/>
    </location>
</feature>